<comment type="function">
    <text evidence="1">Catalyzes the transfer of a phosphate group to glutamate to form L-glutamate 5-phosphate.</text>
</comment>
<comment type="catalytic activity">
    <reaction evidence="1">
        <text>L-glutamate + ATP = L-glutamyl 5-phosphate + ADP</text>
        <dbReference type="Rhea" id="RHEA:14877"/>
        <dbReference type="ChEBI" id="CHEBI:29985"/>
        <dbReference type="ChEBI" id="CHEBI:30616"/>
        <dbReference type="ChEBI" id="CHEBI:58274"/>
        <dbReference type="ChEBI" id="CHEBI:456216"/>
        <dbReference type="EC" id="2.7.2.11"/>
    </reaction>
</comment>
<comment type="pathway">
    <text evidence="1">Amino-acid biosynthesis; L-proline biosynthesis; L-glutamate 5-semialdehyde from L-glutamate: step 1/2.</text>
</comment>
<comment type="subcellular location">
    <subcellularLocation>
        <location evidence="1">Cytoplasm</location>
    </subcellularLocation>
</comment>
<comment type="similarity">
    <text evidence="1">Belongs to the glutamate 5-kinase family.</text>
</comment>
<dbReference type="EC" id="2.7.2.11" evidence="1"/>
<dbReference type="EMBL" id="AE017194">
    <property type="protein sequence ID" value="AAS41940.1"/>
    <property type="molecule type" value="Genomic_DNA"/>
</dbReference>
<dbReference type="SMR" id="Q735X2"/>
<dbReference type="KEGG" id="bca:BCE_3029"/>
<dbReference type="HOGENOM" id="CLU_025400_2_0_9"/>
<dbReference type="UniPathway" id="UPA00098">
    <property type="reaction ID" value="UER00359"/>
</dbReference>
<dbReference type="Proteomes" id="UP000002527">
    <property type="component" value="Chromosome"/>
</dbReference>
<dbReference type="GO" id="GO:0005829">
    <property type="term" value="C:cytosol"/>
    <property type="evidence" value="ECO:0007669"/>
    <property type="project" value="TreeGrafter"/>
</dbReference>
<dbReference type="GO" id="GO:0005524">
    <property type="term" value="F:ATP binding"/>
    <property type="evidence" value="ECO:0007669"/>
    <property type="project" value="UniProtKB-KW"/>
</dbReference>
<dbReference type="GO" id="GO:0004349">
    <property type="term" value="F:glutamate 5-kinase activity"/>
    <property type="evidence" value="ECO:0007669"/>
    <property type="project" value="UniProtKB-UniRule"/>
</dbReference>
<dbReference type="GO" id="GO:0003723">
    <property type="term" value="F:RNA binding"/>
    <property type="evidence" value="ECO:0007669"/>
    <property type="project" value="InterPro"/>
</dbReference>
<dbReference type="GO" id="GO:0055129">
    <property type="term" value="P:L-proline biosynthetic process"/>
    <property type="evidence" value="ECO:0007669"/>
    <property type="project" value="UniProtKB-UniRule"/>
</dbReference>
<dbReference type="CDD" id="cd04242">
    <property type="entry name" value="AAK_G5K_ProB"/>
    <property type="match status" value="1"/>
</dbReference>
<dbReference type="CDD" id="cd21157">
    <property type="entry name" value="PUA_G5K"/>
    <property type="match status" value="1"/>
</dbReference>
<dbReference type="FunFam" id="2.30.130.10:FF:000007">
    <property type="entry name" value="Glutamate 5-kinase"/>
    <property type="match status" value="1"/>
</dbReference>
<dbReference type="FunFam" id="3.40.1160.10:FF:000018">
    <property type="entry name" value="Glutamate 5-kinase"/>
    <property type="match status" value="1"/>
</dbReference>
<dbReference type="Gene3D" id="3.40.1160.10">
    <property type="entry name" value="Acetylglutamate kinase-like"/>
    <property type="match status" value="1"/>
</dbReference>
<dbReference type="Gene3D" id="2.30.130.10">
    <property type="entry name" value="PUA domain"/>
    <property type="match status" value="1"/>
</dbReference>
<dbReference type="HAMAP" id="MF_00456">
    <property type="entry name" value="ProB"/>
    <property type="match status" value="1"/>
</dbReference>
<dbReference type="InterPro" id="IPR036393">
    <property type="entry name" value="AceGlu_kinase-like_sf"/>
</dbReference>
<dbReference type="InterPro" id="IPR001048">
    <property type="entry name" value="Asp/Glu/Uridylate_kinase"/>
</dbReference>
<dbReference type="InterPro" id="IPR041739">
    <property type="entry name" value="G5K_ProB"/>
</dbReference>
<dbReference type="InterPro" id="IPR001057">
    <property type="entry name" value="Glu/AcGlu_kinase"/>
</dbReference>
<dbReference type="InterPro" id="IPR011529">
    <property type="entry name" value="Glu_5kinase"/>
</dbReference>
<dbReference type="InterPro" id="IPR005715">
    <property type="entry name" value="Glu_5kinase/COase_Synthase"/>
</dbReference>
<dbReference type="InterPro" id="IPR019797">
    <property type="entry name" value="Glutamate_5-kinase_CS"/>
</dbReference>
<dbReference type="InterPro" id="IPR002478">
    <property type="entry name" value="PUA"/>
</dbReference>
<dbReference type="InterPro" id="IPR015947">
    <property type="entry name" value="PUA-like_sf"/>
</dbReference>
<dbReference type="InterPro" id="IPR036974">
    <property type="entry name" value="PUA_sf"/>
</dbReference>
<dbReference type="NCBIfam" id="TIGR01027">
    <property type="entry name" value="proB"/>
    <property type="match status" value="1"/>
</dbReference>
<dbReference type="PANTHER" id="PTHR43654">
    <property type="entry name" value="GLUTAMATE 5-KINASE"/>
    <property type="match status" value="1"/>
</dbReference>
<dbReference type="PANTHER" id="PTHR43654:SF1">
    <property type="entry name" value="ISOPENTENYL PHOSPHATE KINASE"/>
    <property type="match status" value="1"/>
</dbReference>
<dbReference type="Pfam" id="PF00696">
    <property type="entry name" value="AA_kinase"/>
    <property type="match status" value="1"/>
</dbReference>
<dbReference type="Pfam" id="PF01472">
    <property type="entry name" value="PUA"/>
    <property type="match status" value="1"/>
</dbReference>
<dbReference type="PIRSF" id="PIRSF000729">
    <property type="entry name" value="GK"/>
    <property type="match status" value="1"/>
</dbReference>
<dbReference type="PRINTS" id="PR00474">
    <property type="entry name" value="GLU5KINASE"/>
</dbReference>
<dbReference type="SMART" id="SM00359">
    <property type="entry name" value="PUA"/>
    <property type="match status" value="1"/>
</dbReference>
<dbReference type="SUPFAM" id="SSF53633">
    <property type="entry name" value="Carbamate kinase-like"/>
    <property type="match status" value="1"/>
</dbReference>
<dbReference type="SUPFAM" id="SSF88697">
    <property type="entry name" value="PUA domain-like"/>
    <property type="match status" value="1"/>
</dbReference>
<dbReference type="PROSITE" id="PS00902">
    <property type="entry name" value="GLUTAMATE_5_KINASE"/>
    <property type="match status" value="1"/>
</dbReference>
<dbReference type="PROSITE" id="PS50890">
    <property type="entry name" value="PUA"/>
    <property type="match status" value="1"/>
</dbReference>
<accession>Q735X2</accession>
<proteinExistence type="inferred from homology"/>
<gene>
    <name evidence="1" type="primary">proB</name>
    <name type="ordered locus">BCE_3029</name>
</gene>
<reference key="1">
    <citation type="journal article" date="2004" name="Nucleic Acids Res.">
        <title>The genome sequence of Bacillus cereus ATCC 10987 reveals metabolic adaptations and a large plasmid related to Bacillus anthracis pXO1.</title>
        <authorList>
            <person name="Rasko D.A."/>
            <person name="Ravel J."/>
            <person name="Oekstad O.A."/>
            <person name="Helgason E."/>
            <person name="Cer R.Z."/>
            <person name="Jiang L."/>
            <person name="Shores K.A."/>
            <person name="Fouts D.E."/>
            <person name="Tourasse N.J."/>
            <person name="Angiuoli S.V."/>
            <person name="Kolonay J.F."/>
            <person name="Nelson W.C."/>
            <person name="Kolstoe A.-B."/>
            <person name="Fraser C.M."/>
            <person name="Read T.D."/>
        </authorList>
    </citation>
    <scope>NUCLEOTIDE SEQUENCE [LARGE SCALE GENOMIC DNA]</scope>
    <source>
        <strain>ATCC 10987 / NRS 248</strain>
    </source>
</reference>
<organism>
    <name type="scientific">Bacillus cereus (strain ATCC 10987 / NRS 248)</name>
    <dbReference type="NCBI Taxonomy" id="222523"/>
    <lineage>
        <taxon>Bacteria</taxon>
        <taxon>Bacillati</taxon>
        <taxon>Bacillota</taxon>
        <taxon>Bacilli</taxon>
        <taxon>Bacillales</taxon>
        <taxon>Bacillaceae</taxon>
        <taxon>Bacillus</taxon>
        <taxon>Bacillus cereus group</taxon>
    </lineage>
</organism>
<sequence>MKKQRIVVKIGSSSLADSHGGISKEQLSDHVAALARLKEEGHEVLLITSGAVAAGFSALGYPSRPVTIKGKQAAAAVGQSLLMQAYTEEFRKYGIVTAQLLLTRSDFSRKEQYSNAYATLGELLNRSALPIINENDSISLEELTFGDNDMLSALVSGLVSADMLMIFTDVNGLYDKNPQKNEDAKKYYFLPEVTEEIASLAGDAGSKLGTGGMKSKIDAAKTALSLGVSVFIGTGRGQEKFVDVLKGKGDGTYVGNAPQKEIKMNKQWIALHSVVSGQIEIDAGAATAIIQHGKSLLPAGVTNVSGFFKVGDVVEVMTQQGRVIGKGQCTYSAEELREIKGMQSQHIQARGERHNYEVIHRDHWVSL</sequence>
<name>PROB_BACC1</name>
<protein>
    <recommendedName>
        <fullName evidence="1">Glutamate 5-kinase</fullName>
        <ecNumber evidence="1">2.7.2.11</ecNumber>
    </recommendedName>
    <alternativeName>
        <fullName evidence="1">Gamma-glutamyl kinase</fullName>
        <shortName evidence="1">GK</shortName>
    </alternativeName>
</protein>
<feature type="chain" id="PRO_0000109633" description="Glutamate 5-kinase">
    <location>
        <begin position="1"/>
        <end position="367"/>
    </location>
</feature>
<feature type="domain" description="PUA" evidence="1">
    <location>
        <begin position="276"/>
        <end position="350"/>
    </location>
</feature>
<feature type="binding site" evidence="1">
    <location>
        <position position="9"/>
    </location>
    <ligand>
        <name>ATP</name>
        <dbReference type="ChEBI" id="CHEBI:30616"/>
    </ligand>
</feature>
<feature type="binding site" evidence="1">
    <location>
        <position position="49"/>
    </location>
    <ligand>
        <name>substrate</name>
    </ligand>
</feature>
<feature type="binding site" evidence="1">
    <location>
        <position position="136"/>
    </location>
    <ligand>
        <name>substrate</name>
    </ligand>
</feature>
<feature type="binding site" evidence="1">
    <location>
        <position position="148"/>
    </location>
    <ligand>
        <name>substrate</name>
    </ligand>
</feature>
<feature type="binding site" evidence="1">
    <location>
        <begin position="168"/>
        <end position="169"/>
    </location>
    <ligand>
        <name>ATP</name>
        <dbReference type="ChEBI" id="CHEBI:30616"/>
    </ligand>
</feature>
<feature type="binding site" evidence="1">
    <location>
        <begin position="210"/>
        <end position="216"/>
    </location>
    <ligand>
        <name>ATP</name>
        <dbReference type="ChEBI" id="CHEBI:30616"/>
    </ligand>
</feature>
<evidence type="ECO:0000255" key="1">
    <source>
        <dbReference type="HAMAP-Rule" id="MF_00456"/>
    </source>
</evidence>
<keyword id="KW-0028">Amino-acid biosynthesis</keyword>
<keyword id="KW-0067">ATP-binding</keyword>
<keyword id="KW-0963">Cytoplasm</keyword>
<keyword id="KW-0418">Kinase</keyword>
<keyword id="KW-0547">Nucleotide-binding</keyword>
<keyword id="KW-0641">Proline biosynthesis</keyword>
<keyword id="KW-0808">Transferase</keyword>